<proteinExistence type="evidence at protein level"/>
<name>RPA34_SCHPO</name>
<sequence>MAKSSEFVNEESSEDESSVSSIEDQHSSKEPEQSVESNNHGESNAQEDVAEIAGLEKVQGKPVLTTNDLKKESNVFLVRLPPGMSADQISQLKVGSKPTVELKQENENTYQIREESTSSVRVFLPDEQGSYTSNEIKTGYVITETPKISQNIDTGITIPTQAPLVPQRKNLRQHFRPIGDAVGPESEPEAEPKSGIKEHILQETGDATVEELQNKGKEKQKELKKGKREKKDEEEKPKKKKQKKSSKKEKN</sequence>
<accession>Q9USZ4</accession>
<organism>
    <name type="scientific">Schizosaccharomyces pombe (strain 972 / ATCC 24843)</name>
    <name type="common">Fission yeast</name>
    <dbReference type="NCBI Taxonomy" id="284812"/>
    <lineage>
        <taxon>Eukaryota</taxon>
        <taxon>Fungi</taxon>
        <taxon>Dikarya</taxon>
        <taxon>Ascomycota</taxon>
        <taxon>Taphrinomycotina</taxon>
        <taxon>Schizosaccharomycetes</taxon>
        <taxon>Schizosaccharomycetales</taxon>
        <taxon>Schizosaccharomycetaceae</taxon>
        <taxon>Schizosaccharomyces</taxon>
    </lineage>
</organism>
<keyword id="KW-0240">DNA-directed RNA polymerase</keyword>
<keyword id="KW-0539">Nucleus</keyword>
<keyword id="KW-0597">Phosphoprotein</keyword>
<keyword id="KW-1185">Reference proteome</keyword>
<keyword id="KW-0804">Transcription</keyword>
<evidence type="ECO:0000250" key="1"/>
<evidence type="ECO:0000256" key="2">
    <source>
        <dbReference type="SAM" id="MobiDB-lite"/>
    </source>
</evidence>
<evidence type="ECO:0000269" key="3">
    <source>
    </source>
</evidence>
<evidence type="ECO:0000305" key="4"/>
<dbReference type="EMBL" id="CU329671">
    <property type="protein sequence ID" value="CAB59807.1"/>
    <property type="molecule type" value="Genomic_DNA"/>
</dbReference>
<dbReference type="PIR" id="T39332">
    <property type="entry name" value="T39332"/>
</dbReference>
<dbReference type="RefSeq" id="NP_595723.1">
    <property type="nucleotide sequence ID" value="NM_001021621.2"/>
</dbReference>
<dbReference type="BioGRID" id="276252">
    <property type="interactions" value="7"/>
</dbReference>
<dbReference type="STRING" id="284812.Q9USZ4"/>
<dbReference type="iPTMnet" id="Q9USZ4"/>
<dbReference type="PaxDb" id="4896-SPBC11G11.05.1"/>
<dbReference type="EnsemblFungi" id="SPBC11G11.05.1">
    <property type="protein sequence ID" value="SPBC11G11.05.1:pep"/>
    <property type="gene ID" value="SPBC11G11.05"/>
</dbReference>
<dbReference type="GeneID" id="2539699"/>
<dbReference type="KEGG" id="spo:2539699"/>
<dbReference type="PomBase" id="SPBC11G11.05">
    <property type="gene designation" value="rpa34"/>
</dbReference>
<dbReference type="VEuPathDB" id="FungiDB:SPBC11G11.05"/>
<dbReference type="HOGENOM" id="CLU_1107660_0_0_1"/>
<dbReference type="InParanoid" id="Q9USZ4"/>
<dbReference type="OMA" id="IEDQHSS"/>
<dbReference type="PRO" id="PR:Q9USZ4"/>
<dbReference type="Proteomes" id="UP000002485">
    <property type="component" value="Chromosome II"/>
</dbReference>
<dbReference type="GO" id="GO:0005634">
    <property type="term" value="C:nucleus"/>
    <property type="evidence" value="ECO:0007005"/>
    <property type="project" value="PomBase"/>
</dbReference>
<dbReference type="GO" id="GO:0005736">
    <property type="term" value="C:RNA polymerase I complex"/>
    <property type="evidence" value="ECO:0000250"/>
    <property type="project" value="PomBase"/>
</dbReference>
<dbReference type="GO" id="GO:0006360">
    <property type="term" value="P:transcription by RNA polymerase I"/>
    <property type="evidence" value="ECO:0000250"/>
    <property type="project" value="PomBase"/>
</dbReference>
<dbReference type="Gene3D" id="6.20.250.70">
    <property type="match status" value="1"/>
</dbReference>
<dbReference type="InterPro" id="IPR013240">
    <property type="entry name" value="DNA-dir_RNA_pol1_su_RPA34"/>
</dbReference>
<dbReference type="Pfam" id="PF08208">
    <property type="entry name" value="RNA_polI_A34"/>
    <property type="match status" value="1"/>
</dbReference>
<reference key="1">
    <citation type="journal article" date="2002" name="Nature">
        <title>The genome sequence of Schizosaccharomyces pombe.</title>
        <authorList>
            <person name="Wood V."/>
            <person name="Gwilliam R."/>
            <person name="Rajandream M.A."/>
            <person name="Lyne M.H."/>
            <person name="Lyne R."/>
            <person name="Stewart A."/>
            <person name="Sgouros J.G."/>
            <person name="Peat N."/>
            <person name="Hayles J."/>
            <person name="Baker S.G."/>
            <person name="Basham D."/>
            <person name="Bowman S."/>
            <person name="Brooks K."/>
            <person name="Brown D."/>
            <person name="Brown S."/>
            <person name="Chillingworth T."/>
            <person name="Churcher C.M."/>
            <person name="Collins M."/>
            <person name="Connor R."/>
            <person name="Cronin A."/>
            <person name="Davis P."/>
            <person name="Feltwell T."/>
            <person name="Fraser A."/>
            <person name="Gentles S."/>
            <person name="Goble A."/>
            <person name="Hamlin N."/>
            <person name="Harris D.E."/>
            <person name="Hidalgo J."/>
            <person name="Hodgson G."/>
            <person name="Holroyd S."/>
            <person name="Hornsby T."/>
            <person name="Howarth S."/>
            <person name="Huckle E.J."/>
            <person name="Hunt S."/>
            <person name="Jagels K."/>
            <person name="James K.D."/>
            <person name="Jones L."/>
            <person name="Jones M."/>
            <person name="Leather S."/>
            <person name="McDonald S."/>
            <person name="McLean J."/>
            <person name="Mooney P."/>
            <person name="Moule S."/>
            <person name="Mungall K.L."/>
            <person name="Murphy L.D."/>
            <person name="Niblett D."/>
            <person name="Odell C."/>
            <person name="Oliver K."/>
            <person name="O'Neil S."/>
            <person name="Pearson D."/>
            <person name="Quail M.A."/>
            <person name="Rabbinowitsch E."/>
            <person name="Rutherford K.M."/>
            <person name="Rutter S."/>
            <person name="Saunders D."/>
            <person name="Seeger K."/>
            <person name="Sharp S."/>
            <person name="Skelton J."/>
            <person name="Simmonds M.N."/>
            <person name="Squares R."/>
            <person name="Squares S."/>
            <person name="Stevens K."/>
            <person name="Taylor K."/>
            <person name="Taylor R.G."/>
            <person name="Tivey A."/>
            <person name="Walsh S.V."/>
            <person name="Warren T."/>
            <person name="Whitehead S."/>
            <person name="Woodward J.R."/>
            <person name="Volckaert G."/>
            <person name="Aert R."/>
            <person name="Robben J."/>
            <person name="Grymonprez B."/>
            <person name="Weltjens I."/>
            <person name="Vanstreels E."/>
            <person name="Rieger M."/>
            <person name="Schaefer M."/>
            <person name="Mueller-Auer S."/>
            <person name="Gabel C."/>
            <person name="Fuchs M."/>
            <person name="Duesterhoeft A."/>
            <person name="Fritzc C."/>
            <person name="Holzer E."/>
            <person name="Moestl D."/>
            <person name="Hilbert H."/>
            <person name="Borzym K."/>
            <person name="Langer I."/>
            <person name="Beck A."/>
            <person name="Lehrach H."/>
            <person name="Reinhardt R."/>
            <person name="Pohl T.M."/>
            <person name="Eger P."/>
            <person name="Zimmermann W."/>
            <person name="Wedler H."/>
            <person name="Wambutt R."/>
            <person name="Purnelle B."/>
            <person name="Goffeau A."/>
            <person name="Cadieu E."/>
            <person name="Dreano S."/>
            <person name="Gloux S."/>
            <person name="Lelaure V."/>
            <person name="Mottier S."/>
            <person name="Galibert F."/>
            <person name="Aves S.J."/>
            <person name="Xiang Z."/>
            <person name="Hunt C."/>
            <person name="Moore K."/>
            <person name="Hurst S.M."/>
            <person name="Lucas M."/>
            <person name="Rochet M."/>
            <person name="Gaillardin C."/>
            <person name="Tallada V.A."/>
            <person name="Garzon A."/>
            <person name="Thode G."/>
            <person name="Daga R.R."/>
            <person name="Cruzado L."/>
            <person name="Jimenez J."/>
            <person name="Sanchez M."/>
            <person name="del Rey F."/>
            <person name="Benito J."/>
            <person name="Dominguez A."/>
            <person name="Revuelta J.L."/>
            <person name="Moreno S."/>
            <person name="Armstrong J."/>
            <person name="Forsburg S.L."/>
            <person name="Cerutti L."/>
            <person name="Lowe T."/>
            <person name="McCombie W.R."/>
            <person name="Paulsen I."/>
            <person name="Potashkin J."/>
            <person name="Shpakovski G.V."/>
            <person name="Ussery D."/>
            <person name="Barrell B.G."/>
            <person name="Nurse P."/>
        </authorList>
    </citation>
    <scope>NUCLEOTIDE SEQUENCE [LARGE SCALE GENOMIC DNA]</scope>
    <source>
        <strain>972 / ATCC 24843</strain>
    </source>
</reference>
<reference key="2">
    <citation type="journal article" date="2008" name="J. Proteome Res.">
        <title>Phosphoproteome analysis of fission yeast.</title>
        <authorList>
            <person name="Wilson-Grady J.T."/>
            <person name="Villen J."/>
            <person name="Gygi S.P."/>
        </authorList>
    </citation>
    <scope>PHOSPHORYLATION [LARGE SCALE ANALYSIS] AT SER-13</scope>
    <scope>IDENTIFICATION BY MASS SPECTROMETRY</scope>
</reference>
<feature type="chain" id="PRO_0000337684" description="DNA-directed RNA polymerase I subunit rpa34">
    <location>
        <begin position="1"/>
        <end position="251"/>
    </location>
</feature>
<feature type="region of interest" description="Disordered" evidence="2">
    <location>
        <begin position="1"/>
        <end position="66"/>
    </location>
</feature>
<feature type="region of interest" description="Disordered" evidence="2">
    <location>
        <begin position="163"/>
        <end position="251"/>
    </location>
</feature>
<feature type="compositionally biased region" description="Acidic residues" evidence="2">
    <location>
        <begin position="8"/>
        <end position="17"/>
    </location>
</feature>
<feature type="compositionally biased region" description="Basic and acidic residues" evidence="2">
    <location>
        <begin position="23"/>
        <end position="32"/>
    </location>
</feature>
<feature type="compositionally biased region" description="Polar residues" evidence="2">
    <location>
        <begin position="34"/>
        <end position="46"/>
    </location>
</feature>
<feature type="compositionally biased region" description="Basic and acidic residues" evidence="2">
    <location>
        <begin position="190"/>
        <end position="201"/>
    </location>
</feature>
<feature type="compositionally biased region" description="Basic and acidic residues" evidence="2">
    <location>
        <begin position="212"/>
        <end position="237"/>
    </location>
</feature>
<feature type="compositionally biased region" description="Basic residues" evidence="2">
    <location>
        <begin position="238"/>
        <end position="251"/>
    </location>
</feature>
<feature type="modified residue" description="Phosphoserine" evidence="3">
    <location>
        <position position="13"/>
    </location>
</feature>
<protein>
    <recommendedName>
        <fullName>DNA-directed RNA polymerase I subunit rpa34</fullName>
        <shortName>RNA polymerase I subunit A34</shortName>
    </recommendedName>
</protein>
<gene>
    <name type="primary">rpa34</name>
    <name type="ORF">SPBC11G11.05</name>
</gene>
<comment type="function">
    <text evidence="1">DNA-dependent RNA polymerase catalyzes the transcription of DNA into RNA using the four ribonucleoside triphosphates as substrates. Component of RNA polymerase I which synthesizes ribosomal RNA precursors (By similarity).</text>
</comment>
<comment type="subunit">
    <text evidence="1">Component of the RNA polymerase I (Pol I) complex.</text>
</comment>
<comment type="subcellular location">
    <subcellularLocation>
        <location>Nucleus</location>
        <location>Nucleolus</location>
    </subcellularLocation>
</comment>
<comment type="similarity">
    <text evidence="4">Belongs to the eukaryotic RPA34 RNA polymerase subunit family.</text>
</comment>